<evidence type="ECO:0000255" key="1">
    <source>
        <dbReference type="HAMAP-Rule" id="MF_00212"/>
    </source>
</evidence>
<gene>
    <name evidence="1" type="primary">mqo</name>
    <name type="ordered locus">Exig_3002</name>
</gene>
<accession>B1YG64</accession>
<name>MQO_EXIS2</name>
<proteinExistence type="inferred from homology"/>
<sequence>MSSMPKQTDVILIGAGVMSATLGVLLKELAPDMKIKVFEKLASAGEESSNEWNNAGTGHAALCELNYTTENADGTIDISKAVKVNEQFQLSRQFWSHLVKEQVLPNPKEFIMPIPHMSMVEGAENVTFLKKRLEALSANPLFKGMEFSEDPEQLKEWIPLIMEGRTSPEPIAATKIDSGTDVNFGALTRILFDHLKQLDVEINYGHGVEDLKRVDGGWEIKVKNERDNRIEHHTAKFVFIGGGGGSLPLLQKTGIPESKQIGGFPVSGLFLVCKNPEIAERHHAKVYGKAKVGAPPMSVPHLDTRYIDGQKSLLFGPFAGFSPKFLKTGSNLDLITSVKPNNVLTMLAAGAKEMGLTKYLIEQVLLSTEQRMNELREFIPNAKTEDWDVVVAGQRVQVIKDTPQGKGALQFGTEVVSAADGSVAALLGASPGASTAVPVMLEVLAKCFPDQLPSWEAKIKEMIPSYGTSLVANPELFDQIHAETTKTLELTEAQPIR</sequence>
<protein>
    <recommendedName>
        <fullName evidence="1">Probable malate:quinone oxidoreductase</fullName>
        <ecNumber evidence="1">1.1.5.4</ecNumber>
    </recommendedName>
    <alternativeName>
        <fullName evidence="1">MQO</fullName>
    </alternativeName>
    <alternativeName>
        <fullName evidence="1">Malate dehydrogenase [quinone]</fullName>
    </alternativeName>
</protein>
<organism>
    <name type="scientific">Exiguobacterium sibiricum (strain DSM 17290 / CCUG 55495 / CIP 109462 / JCM 13490 / 255-15)</name>
    <dbReference type="NCBI Taxonomy" id="262543"/>
    <lineage>
        <taxon>Bacteria</taxon>
        <taxon>Bacillati</taxon>
        <taxon>Bacillota</taxon>
        <taxon>Bacilli</taxon>
        <taxon>Bacillales</taxon>
        <taxon>Bacillales Family XII. Incertae Sedis</taxon>
        <taxon>Exiguobacterium</taxon>
    </lineage>
</organism>
<keyword id="KW-0274">FAD</keyword>
<keyword id="KW-0285">Flavoprotein</keyword>
<keyword id="KW-0560">Oxidoreductase</keyword>
<keyword id="KW-1185">Reference proteome</keyword>
<keyword id="KW-0816">Tricarboxylic acid cycle</keyword>
<reference key="1">
    <citation type="submission" date="2008-04" db="EMBL/GenBank/DDBJ databases">
        <title>Complete sequence of chromosome of Exiguobacterium sibiricum 255-15.</title>
        <authorList>
            <consortium name="US DOE Joint Genome Institute"/>
            <person name="Copeland A."/>
            <person name="Lucas S."/>
            <person name="Lapidus A."/>
            <person name="Glavina del Rio T."/>
            <person name="Dalin E."/>
            <person name="Tice H."/>
            <person name="Bruce D."/>
            <person name="Goodwin L."/>
            <person name="Pitluck S."/>
            <person name="Kiss H."/>
            <person name="Chertkov O."/>
            <person name="Monk C."/>
            <person name="Brettin T."/>
            <person name="Detter J.C."/>
            <person name="Han C."/>
            <person name="Kuske C.R."/>
            <person name="Schmutz J."/>
            <person name="Larimer F."/>
            <person name="Land M."/>
            <person name="Hauser L."/>
            <person name="Kyrpides N."/>
            <person name="Mikhailova N."/>
            <person name="Vishnivetskaya T."/>
            <person name="Rodrigues D.F."/>
            <person name="Gilichinsky D."/>
            <person name="Tiedje J."/>
            <person name="Richardson P."/>
        </authorList>
    </citation>
    <scope>NUCLEOTIDE SEQUENCE [LARGE SCALE GENOMIC DNA]</scope>
    <source>
        <strain>DSM 17290 / CCUG 55495 / CIP 109462 / JCM 13490 / 255-15</strain>
    </source>
</reference>
<feature type="chain" id="PRO_1000099872" description="Probable malate:quinone oxidoreductase">
    <location>
        <begin position="1"/>
        <end position="497"/>
    </location>
</feature>
<comment type="catalytic activity">
    <reaction evidence="1">
        <text>(S)-malate + a quinone = a quinol + oxaloacetate</text>
        <dbReference type="Rhea" id="RHEA:46012"/>
        <dbReference type="ChEBI" id="CHEBI:15589"/>
        <dbReference type="ChEBI" id="CHEBI:16452"/>
        <dbReference type="ChEBI" id="CHEBI:24646"/>
        <dbReference type="ChEBI" id="CHEBI:132124"/>
        <dbReference type="EC" id="1.1.5.4"/>
    </reaction>
</comment>
<comment type="cofactor">
    <cofactor evidence="1">
        <name>FAD</name>
        <dbReference type="ChEBI" id="CHEBI:57692"/>
    </cofactor>
</comment>
<comment type="pathway">
    <text evidence="1">Carbohydrate metabolism; tricarboxylic acid cycle; oxaloacetate from (S)-malate (quinone route): step 1/1.</text>
</comment>
<comment type="similarity">
    <text evidence="1">Belongs to the MQO family.</text>
</comment>
<dbReference type="EC" id="1.1.5.4" evidence="1"/>
<dbReference type="EMBL" id="CP001022">
    <property type="protein sequence ID" value="ACB62448.1"/>
    <property type="molecule type" value="Genomic_DNA"/>
</dbReference>
<dbReference type="RefSeq" id="WP_012371863.1">
    <property type="nucleotide sequence ID" value="NC_010556.1"/>
</dbReference>
<dbReference type="SMR" id="B1YG64"/>
<dbReference type="STRING" id="262543.Exig_3002"/>
<dbReference type="KEGG" id="esi:Exig_3002"/>
<dbReference type="eggNOG" id="COG0579">
    <property type="taxonomic scope" value="Bacteria"/>
</dbReference>
<dbReference type="HOGENOM" id="CLU_028151_0_0_9"/>
<dbReference type="OrthoDB" id="9763983at2"/>
<dbReference type="UniPathway" id="UPA00223">
    <property type="reaction ID" value="UER01008"/>
</dbReference>
<dbReference type="Proteomes" id="UP000001681">
    <property type="component" value="Chromosome"/>
</dbReference>
<dbReference type="GO" id="GO:0047545">
    <property type="term" value="F:2-hydroxyglutarate dehydrogenase activity"/>
    <property type="evidence" value="ECO:0007669"/>
    <property type="project" value="TreeGrafter"/>
</dbReference>
<dbReference type="GO" id="GO:0008924">
    <property type="term" value="F:L-malate dehydrogenase (quinone) activity"/>
    <property type="evidence" value="ECO:0007669"/>
    <property type="project" value="UniProtKB-UniRule"/>
</dbReference>
<dbReference type="GO" id="GO:0006099">
    <property type="term" value="P:tricarboxylic acid cycle"/>
    <property type="evidence" value="ECO:0007669"/>
    <property type="project" value="UniProtKB-UniRule"/>
</dbReference>
<dbReference type="HAMAP" id="MF_00212">
    <property type="entry name" value="MQO"/>
    <property type="match status" value="1"/>
</dbReference>
<dbReference type="InterPro" id="IPR036188">
    <property type="entry name" value="FAD/NAD-bd_sf"/>
</dbReference>
<dbReference type="InterPro" id="IPR006231">
    <property type="entry name" value="MQO"/>
</dbReference>
<dbReference type="NCBIfam" id="TIGR01320">
    <property type="entry name" value="mal_quin_oxido"/>
    <property type="match status" value="1"/>
</dbReference>
<dbReference type="NCBIfam" id="NF003603">
    <property type="entry name" value="PRK05257.1-1"/>
    <property type="match status" value="1"/>
</dbReference>
<dbReference type="NCBIfam" id="NF003604">
    <property type="entry name" value="PRK05257.1-3"/>
    <property type="match status" value="1"/>
</dbReference>
<dbReference type="NCBIfam" id="NF003605">
    <property type="entry name" value="PRK05257.1-4"/>
    <property type="match status" value="1"/>
</dbReference>
<dbReference type="NCBIfam" id="NF003606">
    <property type="entry name" value="PRK05257.2-1"/>
    <property type="match status" value="1"/>
</dbReference>
<dbReference type="NCBIfam" id="NF003608">
    <property type="entry name" value="PRK05257.2-4"/>
    <property type="match status" value="1"/>
</dbReference>
<dbReference type="NCBIfam" id="NF003610">
    <property type="entry name" value="PRK05257.3-1"/>
    <property type="match status" value="1"/>
</dbReference>
<dbReference type="NCBIfam" id="NF003611">
    <property type="entry name" value="PRK05257.3-2"/>
    <property type="match status" value="1"/>
</dbReference>
<dbReference type="NCBIfam" id="NF009875">
    <property type="entry name" value="PRK13339.1"/>
    <property type="match status" value="1"/>
</dbReference>
<dbReference type="PANTHER" id="PTHR43104">
    <property type="entry name" value="L-2-HYDROXYGLUTARATE DEHYDROGENASE, MITOCHONDRIAL"/>
    <property type="match status" value="1"/>
</dbReference>
<dbReference type="PANTHER" id="PTHR43104:SF2">
    <property type="entry name" value="L-2-HYDROXYGLUTARATE DEHYDROGENASE, MITOCHONDRIAL"/>
    <property type="match status" value="1"/>
</dbReference>
<dbReference type="Pfam" id="PF06039">
    <property type="entry name" value="Mqo"/>
    <property type="match status" value="1"/>
</dbReference>
<dbReference type="SUPFAM" id="SSF51905">
    <property type="entry name" value="FAD/NAD(P)-binding domain"/>
    <property type="match status" value="1"/>
</dbReference>